<gene>
    <name evidence="1" type="primary">adk</name>
    <name type="ordered locus">Cgl0556</name>
    <name type="ordered locus">cg0648</name>
</gene>
<feature type="chain" id="PRO_0000158762" description="Adenylate kinase">
    <location>
        <begin position="1"/>
        <end position="181"/>
    </location>
</feature>
<feature type="region of interest" description="NMP" evidence="1">
    <location>
        <begin position="30"/>
        <end position="59"/>
    </location>
</feature>
<feature type="region of interest" description="LID" evidence="1">
    <location>
        <begin position="126"/>
        <end position="132"/>
    </location>
</feature>
<feature type="binding site" evidence="1">
    <location>
        <begin position="10"/>
        <end position="15"/>
    </location>
    <ligand>
        <name>ATP</name>
        <dbReference type="ChEBI" id="CHEBI:30616"/>
    </ligand>
</feature>
<feature type="binding site" evidence="1">
    <location>
        <position position="31"/>
    </location>
    <ligand>
        <name>AMP</name>
        <dbReference type="ChEBI" id="CHEBI:456215"/>
    </ligand>
</feature>
<feature type="binding site" evidence="1">
    <location>
        <position position="36"/>
    </location>
    <ligand>
        <name>AMP</name>
        <dbReference type="ChEBI" id="CHEBI:456215"/>
    </ligand>
</feature>
<feature type="binding site" evidence="1">
    <location>
        <begin position="57"/>
        <end position="59"/>
    </location>
    <ligand>
        <name>AMP</name>
        <dbReference type="ChEBI" id="CHEBI:456215"/>
    </ligand>
</feature>
<feature type="binding site" evidence="1">
    <location>
        <begin position="85"/>
        <end position="88"/>
    </location>
    <ligand>
        <name>AMP</name>
        <dbReference type="ChEBI" id="CHEBI:456215"/>
    </ligand>
</feature>
<feature type="binding site" evidence="1">
    <location>
        <position position="92"/>
    </location>
    <ligand>
        <name>AMP</name>
        <dbReference type="ChEBI" id="CHEBI:456215"/>
    </ligand>
</feature>
<feature type="binding site" evidence="1">
    <location>
        <position position="127"/>
    </location>
    <ligand>
        <name>ATP</name>
        <dbReference type="ChEBI" id="CHEBI:30616"/>
    </ligand>
</feature>
<feature type="binding site" evidence="1">
    <location>
        <position position="129"/>
    </location>
    <ligand>
        <name>AMP</name>
        <dbReference type="ChEBI" id="CHEBI:456215"/>
    </ligand>
</feature>
<feature type="binding site" evidence="1">
    <location>
        <position position="140"/>
    </location>
    <ligand>
        <name>AMP</name>
        <dbReference type="ChEBI" id="CHEBI:456215"/>
    </ligand>
</feature>
<feature type="binding site" evidence="1">
    <location>
        <position position="166"/>
    </location>
    <ligand>
        <name>ATP</name>
        <dbReference type="ChEBI" id="CHEBI:30616"/>
    </ligand>
</feature>
<dbReference type="EC" id="2.7.4.3" evidence="1"/>
<dbReference type="EMBL" id="BA000036">
    <property type="protein sequence ID" value="BAB97950.1"/>
    <property type="molecule type" value="Genomic_DNA"/>
</dbReference>
<dbReference type="EMBL" id="BX927149">
    <property type="protein sequence ID" value="CAF19263.1"/>
    <property type="molecule type" value="Genomic_DNA"/>
</dbReference>
<dbReference type="EMBL" id="D14162">
    <property type="protein sequence ID" value="BAA03208.1"/>
    <property type="molecule type" value="Genomic_DNA"/>
</dbReference>
<dbReference type="PIR" id="I40341">
    <property type="entry name" value="I40341"/>
</dbReference>
<dbReference type="RefSeq" id="NP_599794.1">
    <property type="nucleotide sequence ID" value="NC_003450.3"/>
</dbReference>
<dbReference type="RefSeq" id="WP_003854403.1">
    <property type="nucleotide sequence ID" value="NC_006958.1"/>
</dbReference>
<dbReference type="SMR" id="P49973"/>
<dbReference type="STRING" id="196627.cg0648"/>
<dbReference type="KEGG" id="cgb:cg0648"/>
<dbReference type="KEGG" id="cgl:Cgl0556"/>
<dbReference type="PATRIC" id="fig|196627.13.peg.549"/>
<dbReference type="eggNOG" id="COG0563">
    <property type="taxonomic scope" value="Bacteria"/>
</dbReference>
<dbReference type="HOGENOM" id="CLU_032354_4_1_11"/>
<dbReference type="OrthoDB" id="9805030at2"/>
<dbReference type="BioCyc" id="CORYNE:G18NG-10119-MONOMER"/>
<dbReference type="UniPathway" id="UPA00588">
    <property type="reaction ID" value="UER00649"/>
</dbReference>
<dbReference type="Proteomes" id="UP000000582">
    <property type="component" value="Chromosome"/>
</dbReference>
<dbReference type="Proteomes" id="UP000001009">
    <property type="component" value="Chromosome"/>
</dbReference>
<dbReference type="GO" id="GO:0005737">
    <property type="term" value="C:cytoplasm"/>
    <property type="evidence" value="ECO:0007669"/>
    <property type="project" value="UniProtKB-SubCell"/>
</dbReference>
<dbReference type="GO" id="GO:0004017">
    <property type="term" value="F:adenylate kinase activity"/>
    <property type="evidence" value="ECO:0007669"/>
    <property type="project" value="UniProtKB-UniRule"/>
</dbReference>
<dbReference type="GO" id="GO:0005524">
    <property type="term" value="F:ATP binding"/>
    <property type="evidence" value="ECO:0007669"/>
    <property type="project" value="UniProtKB-UniRule"/>
</dbReference>
<dbReference type="GO" id="GO:0044209">
    <property type="term" value="P:AMP salvage"/>
    <property type="evidence" value="ECO:0007669"/>
    <property type="project" value="UniProtKB-UniRule"/>
</dbReference>
<dbReference type="CDD" id="cd01428">
    <property type="entry name" value="ADK"/>
    <property type="match status" value="1"/>
</dbReference>
<dbReference type="Gene3D" id="3.40.50.300">
    <property type="entry name" value="P-loop containing nucleotide triphosphate hydrolases"/>
    <property type="match status" value="1"/>
</dbReference>
<dbReference type="HAMAP" id="MF_00235">
    <property type="entry name" value="Adenylate_kinase_Adk"/>
    <property type="match status" value="1"/>
</dbReference>
<dbReference type="InterPro" id="IPR000850">
    <property type="entry name" value="Adenylat/UMP-CMP_kin"/>
</dbReference>
<dbReference type="InterPro" id="IPR033690">
    <property type="entry name" value="Adenylat_kinase_CS"/>
</dbReference>
<dbReference type="InterPro" id="IPR027417">
    <property type="entry name" value="P-loop_NTPase"/>
</dbReference>
<dbReference type="NCBIfam" id="NF001381">
    <property type="entry name" value="PRK00279.1-3"/>
    <property type="match status" value="1"/>
</dbReference>
<dbReference type="NCBIfam" id="NF011100">
    <property type="entry name" value="PRK14527.1"/>
    <property type="match status" value="1"/>
</dbReference>
<dbReference type="NCBIfam" id="NF011101">
    <property type="entry name" value="PRK14528.1"/>
    <property type="match status" value="1"/>
</dbReference>
<dbReference type="NCBIfam" id="NF011104">
    <property type="entry name" value="PRK14531.1"/>
    <property type="match status" value="1"/>
</dbReference>
<dbReference type="PANTHER" id="PTHR23359">
    <property type="entry name" value="NUCLEOTIDE KINASE"/>
    <property type="match status" value="1"/>
</dbReference>
<dbReference type="Pfam" id="PF00406">
    <property type="entry name" value="ADK"/>
    <property type="match status" value="1"/>
</dbReference>
<dbReference type="PRINTS" id="PR00094">
    <property type="entry name" value="ADENYLTKNASE"/>
</dbReference>
<dbReference type="SUPFAM" id="SSF52540">
    <property type="entry name" value="P-loop containing nucleoside triphosphate hydrolases"/>
    <property type="match status" value="1"/>
</dbReference>
<dbReference type="PROSITE" id="PS00113">
    <property type="entry name" value="ADENYLATE_KINASE"/>
    <property type="match status" value="1"/>
</dbReference>
<protein>
    <recommendedName>
        <fullName evidence="1">Adenylate kinase</fullName>
        <shortName evidence="1">AK</shortName>
        <ecNumber evidence="1">2.7.4.3</ecNumber>
    </recommendedName>
    <alternativeName>
        <fullName evidence="1">ATP-AMP transphosphorylase</fullName>
    </alternativeName>
    <alternativeName>
        <fullName evidence="1">ATP:AMP phosphotransferase</fullName>
    </alternativeName>
    <alternativeName>
        <fullName evidence="1">Adenylate monophosphate kinase</fullName>
    </alternativeName>
</protein>
<evidence type="ECO:0000255" key="1">
    <source>
        <dbReference type="HAMAP-Rule" id="MF_00235"/>
    </source>
</evidence>
<name>KAD_CORGL</name>
<organism>
    <name type="scientific">Corynebacterium glutamicum (strain ATCC 13032 / DSM 20300 / JCM 1318 / BCRC 11384 / CCUG 27702 / LMG 3730 / NBRC 12168 / NCIMB 10025 / NRRL B-2784 / 534)</name>
    <dbReference type="NCBI Taxonomy" id="196627"/>
    <lineage>
        <taxon>Bacteria</taxon>
        <taxon>Bacillati</taxon>
        <taxon>Actinomycetota</taxon>
        <taxon>Actinomycetes</taxon>
        <taxon>Mycobacteriales</taxon>
        <taxon>Corynebacteriaceae</taxon>
        <taxon>Corynebacterium</taxon>
    </lineage>
</organism>
<accession>P49973</accession>
<reference key="1">
    <citation type="journal article" date="2003" name="Appl. Microbiol. Biotechnol.">
        <title>The Corynebacterium glutamicum genome: features and impacts on biotechnological processes.</title>
        <authorList>
            <person name="Ikeda M."/>
            <person name="Nakagawa S."/>
        </authorList>
    </citation>
    <scope>NUCLEOTIDE SEQUENCE [LARGE SCALE GENOMIC DNA]</scope>
    <source>
        <strain>ATCC 13032 / DSM 20300 / JCM 1318 / BCRC 11384 / CCUG 27702 / LMG 3730 / NBRC 12168 / NCIMB 10025 / NRRL B-2784 / 534</strain>
    </source>
</reference>
<reference key="2">
    <citation type="journal article" date="2003" name="J. Biotechnol.">
        <title>The complete Corynebacterium glutamicum ATCC 13032 genome sequence and its impact on the production of L-aspartate-derived amino acids and vitamins.</title>
        <authorList>
            <person name="Kalinowski J."/>
            <person name="Bathe B."/>
            <person name="Bartels D."/>
            <person name="Bischoff N."/>
            <person name="Bott M."/>
            <person name="Burkovski A."/>
            <person name="Dusch N."/>
            <person name="Eggeling L."/>
            <person name="Eikmanns B.J."/>
            <person name="Gaigalat L."/>
            <person name="Goesmann A."/>
            <person name="Hartmann M."/>
            <person name="Huthmacher K."/>
            <person name="Kraemer R."/>
            <person name="Linke B."/>
            <person name="McHardy A.C."/>
            <person name="Meyer F."/>
            <person name="Moeckel B."/>
            <person name="Pfefferle W."/>
            <person name="Puehler A."/>
            <person name="Rey D.A."/>
            <person name="Rueckert C."/>
            <person name="Rupp O."/>
            <person name="Sahm H."/>
            <person name="Wendisch V.F."/>
            <person name="Wiegraebe I."/>
            <person name="Tauch A."/>
        </authorList>
    </citation>
    <scope>NUCLEOTIDE SEQUENCE [LARGE SCALE GENOMIC DNA]</scope>
    <source>
        <strain>ATCC 13032 / DSM 20300 / JCM 1318 / BCRC 11384 / CCUG 27702 / LMG 3730 / NBRC 12168 / NCIMB 10025 / NRRL B-2784 / 534</strain>
    </source>
</reference>
<reference key="3">
    <citation type="journal article" date="1994" name="Gene">
        <title>Cloning and sequencing of the secY homolog from Coryneform bacteria.</title>
        <authorList>
            <person name="Kobayashi M."/>
            <person name="Fugono N."/>
            <person name="Asai Y."/>
            <person name="Inui M."/>
            <person name="Vertes A.A."/>
            <person name="Kurusu Y."/>
            <person name="Yukawa H."/>
        </authorList>
    </citation>
    <scope>NUCLEOTIDE SEQUENCE [GENOMIC DNA] OF 1-43</scope>
    <source>
        <strain>MJ233</strain>
    </source>
</reference>
<keyword id="KW-0067">ATP-binding</keyword>
<keyword id="KW-0963">Cytoplasm</keyword>
<keyword id="KW-0418">Kinase</keyword>
<keyword id="KW-0545">Nucleotide biosynthesis</keyword>
<keyword id="KW-0547">Nucleotide-binding</keyword>
<keyword id="KW-1185">Reference proteome</keyword>
<keyword id="KW-0808">Transferase</keyword>
<comment type="function">
    <text evidence="1">Catalyzes the reversible transfer of the terminal phosphate group between ATP and AMP. Plays an important role in cellular energy homeostasis and in adenine nucleotide metabolism.</text>
</comment>
<comment type="catalytic activity">
    <reaction evidence="1">
        <text>AMP + ATP = 2 ADP</text>
        <dbReference type="Rhea" id="RHEA:12973"/>
        <dbReference type="ChEBI" id="CHEBI:30616"/>
        <dbReference type="ChEBI" id="CHEBI:456215"/>
        <dbReference type="ChEBI" id="CHEBI:456216"/>
        <dbReference type="EC" id="2.7.4.3"/>
    </reaction>
</comment>
<comment type="pathway">
    <text evidence="1">Purine metabolism; AMP biosynthesis via salvage pathway; AMP from ADP: step 1/1.</text>
</comment>
<comment type="subunit">
    <text evidence="1">Monomer.</text>
</comment>
<comment type="subcellular location">
    <subcellularLocation>
        <location evidence="1">Cytoplasm</location>
    </subcellularLocation>
</comment>
<comment type="domain">
    <text evidence="1">Consists of three domains, a large central CORE domain and two small peripheral domains, NMPbind and LID, which undergo movements during catalysis. The LID domain closes over the site of phosphoryl transfer upon ATP binding. Assembling and dissambling the active center during each catalytic cycle provides an effective means to prevent ATP hydrolysis.</text>
</comment>
<comment type="similarity">
    <text evidence="1">Belongs to the adenylate kinase family.</text>
</comment>
<sequence length="181" mass="19427">MRLVLLGPPGAGKGTQAAILSEKLGIPHISTGDLFRANIGEGTPLGIEAKQYIDAGKLVPTDVTARMVASRLAESDAAEGFLLDGFPRTVEQADILANLLSEAGQTLDGVVNYQVSEDVVVERMLSRGRADDNEETIRTRLGVYRDETAPLIDHYGDKIINIEAEGEVEEINARTLKALGK</sequence>
<proteinExistence type="inferred from homology"/>